<accession>A5UKB5</accession>
<gene>
    <name evidence="1" type="primary">atpE</name>
    <name type="ordered locus">Msm_0438</name>
</gene>
<name>AATE_METS3</name>
<keyword id="KW-0066">ATP synthesis</keyword>
<keyword id="KW-1003">Cell membrane</keyword>
<keyword id="KW-0375">Hydrogen ion transport</keyword>
<keyword id="KW-0406">Ion transport</keyword>
<keyword id="KW-0472">Membrane</keyword>
<keyword id="KW-0813">Transport</keyword>
<reference key="1">
    <citation type="journal article" date="2007" name="Proc. Natl. Acad. Sci. U.S.A.">
        <title>Genomic and metabolic adaptations of Methanobrevibacter smithii to the human gut.</title>
        <authorList>
            <person name="Samuel B.S."/>
            <person name="Hansen E.E."/>
            <person name="Manchester J.K."/>
            <person name="Coutinho P.M."/>
            <person name="Henrissat B."/>
            <person name="Fulton R."/>
            <person name="Latreille P."/>
            <person name="Kim K."/>
            <person name="Wilson R.K."/>
            <person name="Gordon J.I."/>
        </authorList>
    </citation>
    <scope>NUCLEOTIDE SEQUENCE [LARGE SCALE GENOMIC DNA]</scope>
    <source>
        <strain>ATCC 35061 / DSM 861 / OCM 144 / PS</strain>
    </source>
</reference>
<feature type="chain" id="PRO_1000059417" description="A-type ATP synthase subunit E">
    <location>
        <begin position="1"/>
        <end position="208"/>
    </location>
</feature>
<feature type="region of interest" description="Disordered" evidence="2">
    <location>
        <begin position="37"/>
        <end position="57"/>
    </location>
</feature>
<organism>
    <name type="scientific">Methanobrevibacter smithii (strain ATCC 35061 / DSM 861 / OCM 144 / PS)</name>
    <dbReference type="NCBI Taxonomy" id="420247"/>
    <lineage>
        <taxon>Archaea</taxon>
        <taxon>Methanobacteriati</taxon>
        <taxon>Methanobacteriota</taxon>
        <taxon>Methanomada group</taxon>
        <taxon>Methanobacteria</taxon>
        <taxon>Methanobacteriales</taxon>
        <taxon>Methanobacteriaceae</taxon>
        <taxon>Methanobrevibacter</taxon>
    </lineage>
</organism>
<sequence>MSSGTNKIVESIKSEAQEKADKIIQDAQAEIATINSDAEKTAEAEKNKILDNGKKQSDMKYQQIISEAKMNARRAELGAKEEVIEAAFAKATEDLKAKASSDDAEYSESLIKMIEEATEELGGGDLIVQVKESDVAKVEGHLKKLSADLATKTGVSTTLVLGEPIDAIGGAILKTRNGDIEVNNTIESRLDRFKGLLRSEVANVLFKN</sequence>
<comment type="function">
    <text evidence="1">Component of the A-type ATP synthase that produces ATP from ADP in the presence of a proton gradient across the membrane.</text>
</comment>
<comment type="subunit">
    <text evidence="1">Has multiple subunits with at least A(3), B(3), C, D, E, F, H, I and proteolipid K(x).</text>
</comment>
<comment type="subcellular location">
    <subcellularLocation>
        <location evidence="1">Cell membrane</location>
        <topology evidence="1">Peripheral membrane protein</topology>
    </subcellularLocation>
</comment>
<comment type="similarity">
    <text evidence="1">Belongs to the V-ATPase E subunit family.</text>
</comment>
<proteinExistence type="inferred from homology"/>
<protein>
    <recommendedName>
        <fullName evidence="1">A-type ATP synthase subunit E</fullName>
    </recommendedName>
</protein>
<dbReference type="EMBL" id="CP000678">
    <property type="protein sequence ID" value="ABQ86643.1"/>
    <property type="molecule type" value="Genomic_DNA"/>
</dbReference>
<dbReference type="RefSeq" id="WP_004032186.1">
    <property type="nucleotide sequence ID" value="NZ_CP117965.1"/>
</dbReference>
<dbReference type="SMR" id="A5UKB5"/>
<dbReference type="STRING" id="420247.Msm_0438"/>
<dbReference type="EnsemblBacteria" id="ABQ86643">
    <property type="protein sequence ID" value="ABQ86643"/>
    <property type="gene ID" value="Msm_0438"/>
</dbReference>
<dbReference type="KEGG" id="msi:Msm_0438"/>
<dbReference type="PATRIC" id="fig|420247.28.peg.438"/>
<dbReference type="eggNOG" id="arCOG00869">
    <property type="taxonomic scope" value="Archaea"/>
</dbReference>
<dbReference type="HOGENOM" id="CLU_105846_1_0_2"/>
<dbReference type="Proteomes" id="UP000001992">
    <property type="component" value="Chromosome"/>
</dbReference>
<dbReference type="GO" id="GO:0005886">
    <property type="term" value="C:plasma membrane"/>
    <property type="evidence" value="ECO:0007669"/>
    <property type="project" value="UniProtKB-SubCell"/>
</dbReference>
<dbReference type="GO" id="GO:0033178">
    <property type="term" value="C:proton-transporting two-sector ATPase complex, catalytic domain"/>
    <property type="evidence" value="ECO:0007669"/>
    <property type="project" value="InterPro"/>
</dbReference>
<dbReference type="GO" id="GO:0005524">
    <property type="term" value="F:ATP binding"/>
    <property type="evidence" value="ECO:0007669"/>
    <property type="project" value="UniProtKB-UniRule"/>
</dbReference>
<dbReference type="GO" id="GO:0046933">
    <property type="term" value="F:proton-transporting ATP synthase activity, rotational mechanism"/>
    <property type="evidence" value="ECO:0007669"/>
    <property type="project" value="UniProtKB-UniRule"/>
</dbReference>
<dbReference type="GO" id="GO:0046961">
    <property type="term" value="F:proton-transporting ATPase activity, rotational mechanism"/>
    <property type="evidence" value="ECO:0007669"/>
    <property type="project" value="InterPro"/>
</dbReference>
<dbReference type="GO" id="GO:0042777">
    <property type="term" value="P:proton motive force-driven plasma membrane ATP synthesis"/>
    <property type="evidence" value="ECO:0007669"/>
    <property type="project" value="UniProtKB-UniRule"/>
</dbReference>
<dbReference type="Gene3D" id="3.30.2320.30">
    <property type="entry name" value="ATP synthase, E subunit, C-terminal"/>
    <property type="match status" value="1"/>
</dbReference>
<dbReference type="Gene3D" id="1.20.5.620">
    <property type="entry name" value="F1F0 ATP synthase subunit B, membrane domain"/>
    <property type="match status" value="1"/>
</dbReference>
<dbReference type="HAMAP" id="MF_00311">
    <property type="entry name" value="ATP_synth_E_arch"/>
    <property type="match status" value="1"/>
</dbReference>
<dbReference type="InterPro" id="IPR038495">
    <property type="entry name" value="ATPase_E_C"/>
</dbReference>
<dbReference type="InterPro" id="IPR002842">
    <property type="entry name" value="ATPase_V1_Esu"/>
</dbReference>
<dbReference type="PANTHER" id="PTHR45715">
    <property type="entry name" value="ATPASE H+-TRANSPORTING V1 SUBUNIT E1A-RELATED"/>
    <property type="match status" value="1"/>
</dbReference>
<dbReference type="Pfam" id="PF01991">
    <property type="entry name" value="vATP-synt_E"/>
    <property type="match status" value="1"/>
</dbReference>
<dbReference type="SUPFAM" id="SSF160527">
    <property type="entry name" value="V-type ATPase subunit E-like"/>
    <property type="match status" value="1"/>
</dbReference>
<evidence type="ECO:0000255" key="1">
    <source>
        <dbReference type="HAMAP-Rule" id="MF_00311"/>
    </source>
</evidence>
<evidence type="ECO:0000256" key="2">
    <source>
        <dbReference type="SAM" id="MobiDB-lite"/>
    </source>
</evidence>